<name>KTHY_SYNS9</name>
<gene>
    <name evidence="1" type="primary">tmk</name>
    <name type="ordered locus">Syncc9902_0312</name>
</gene>
<comment type="function">
    <text evidence="1">Phosphorylation of dTMP to form dTDP in both de novo and salvage pathways of dTTP synthesis.</text>
</comment>
<comment type="catalytic activity">
    <reaction evidence="1">
        <text>dTMP + ATP = dTDP + ADP</text>
        <dbReference type="Rhea" id="RHEA:13517"/>
        <dbReference type="ChEBI" id="CHEBI:30616"/>
        <dbReference type="ChEBI" id="CHEBI:58369"/>
        <dbReference type="ChEBI" id="CHEBI:63528"/>
        <dbReference type="ChEBI" id="CHEBI:456216"/>
        <dbReference type="EC" id="2.7.4.9"/>
    </reaction>
</comment>
<comment type="similarity">
    <text evidence="1">Belongs to the thymidylate kinase family.</text>
</comment>
<evidence type="ECO:0000255" key="1">
    <source>
        <dbReference type="HAMAP-Rule" id="MF_00165"/>
    </source>
</evidence>
<sequence>MTGRFIVLDGIDGCGKSTQIRHLAQWLPASGLMPSTAQLICTREPGGTPLGQSIRELLLHTEADQVPSVTAELLLYAADRAQHVDTVIRPALLRGDWVLSDRFAGSTLAYQGYGRGLDRQLITRLESIATTGLEPDLTAWLMVPVEVSLQRRHGEKEDRIEAEGRAFLRRVADGFAVLAEQRNWSQIDAQQSVSKLSQVLEQTLRETLQ</sequence>
<reference key="1">
    <citation type="submission" date="2005-08" db="EMBL/GenBank/DDBJ databases">
        <title>Complete sequence of Synechococcus sp. CC9902.</title>
        <authorList>
            <person name="Copeland A."/>
            <person name="Lucas S."/>
            <person name="Lapidus A."/>
            <person name="Barry K."/>
            <person name="Detter J.C."/>
            <person name="Glavina T."/>
            <person name="Hammon N."/>
            <person name="Israni S."/>
            <person name="Pitluck S."/>
            <person name="Martinez M."/>
            <person name="Schmutz J."/>
            <person name="Larimer F."/>
            <person name="Land M."/>
            <person name="Kyrpides N."/>
            <person name="Ivanova N."/>
            <person name="Richardson P."/>
        </authorList>
    </citation>
    <scope>NUCLEOTIDE SEQUENCE [LARGE SCALE GENOMIC DNA]</scope>
    <source>
        <strain>CC9902</strain>
    </source>
</reference>
<protein>
    <recommendedName>
        <fullName evidence="1">Thymidylate kinase</fullName>
        <ecNumber evidence="1">2.7.4.9</ecNumber>
    </recommendedName>
    <alternativeName>
        <fullName evidence="1">dTMP kinase</fullName>
    </alternativeName>
</protein>
<keyword id="KW-0067">ATP-binding</keyword>
<keyword id="KW-0418">Kinase</keyword>
<keyword id="KW-0545">Nucleotide biosynthesis</keyword>
<keyword id="KW-0547">Nucleotide-binding</keyword>
<keyword id="KW-1185">Reference proteome</keyword>
<keyword id="KW-0808">Transferase</keyword>
<dbReference type="EC" id="2.7.4.9" evidence="1"/>
<dbReference type="EMBL" id="CP000097">
    <property type="protein sequence ID" value="ABB25285.1"/>
    <property type="molecule type" value="Genomic_DNA"/>
</dbReference>
<dbReference type="RefSeq" id="WP_011359142.1">
    <property type="nucleotide sequence ID" value="NC_007513.1"/>
</dbReference>
<dbReference type="SMR" id="Q3B043"/>
<dbReference type="STRING" id="316279.Syncc9902_0312"/>
<dbReference type="KEGG" id="sye:Syncc9902_0312"/>
<dbReference type="eggNOG" id="COG0125">
    <property type="taxonomic scope" value="Bacteria"/>
</dbReference>
<dbReference type="HOGENOM" id="CLU_049131_0_0_3"/>
<dbReference type="OrthoDB" id="9774907at2"/>
<dbReference type="Proteomes" id="UP000002712">
    <property type="component" value="Chromosome"/>
</dbReference>
<dbReference type="GO" id="GO:0005829">
    <property type="term" value="C:cytosol"/>
    <property type="evidence" value="ECO:0007669"/>
    <property type="project" value="TreeGrafter"/>
</dbReference>
<dbReference type="GO" id="GO:0005524">
    <property type="term" value="F:ATP binding"/>
    <property type="evidence" value="ECO:0007669"/>
    <property type="project" value="UniProtKB-UniRule"/>
</dbReference>
<dbReference type="GO" id="GO:0004798">
    <property type="term" value="F:dTMP kinase activity"/>
    <property type="evidence" value="ECO:0007669"/>
    <property type="project" value="UniProtKB-UniRule"/>
</dbReference>
<dbReference type="GO" id="GO:0006233">
    <property type="term" value="P:dTDP biosynthetic process"/>
    <property type="evidence" value="ECO:0007669"/>
    <property type="project" value="InterPro"/>
</dbReference>
<dbReference type="GO" id="GO:0006235">
    <property type="term" value="P:dTTP biosynthetic process"/>
    <property type="evidence" value="ECO:0007669"/>
    <property type="project" value="UniProtKB-UniRule"/>
</dbReference>
<dbReference type="GO" id="GO:0006227">
    <property type="term" value="P:dUDP biosynthetic process"/>
    <property type="evidence" value="ECO:0007669"/>
    <property type="project" value="TreeGrafter"/>
</dbReference>
<dbReference type="CDD" id="cd01672">
    <property type="entry name" value="TMPK"/>
    <property type="match status" value="1"/>
</dbReference>
<dbReference type="FunFam" id="3.40.50.300:FF:000225">
    <property type="entry name" value="Thymidylate kinase"/>
    <property type="match status" value="1"/>
</dbReference>
<dbReference type="Gene3D" id="3.40.50.300">
    <property type="entry name" value="P-loop containing nucleotide triphosphate hydrolases"/>
    <property type="match status" value="1"/>
</dbReference>
<dbReference type="HAMAP" id="MF_00165">
    <property type="entry name" value="Thymidylate_kinase"/>
    <property type="match status" value="1"/>
</dbReference>
<dbReference type="InterPro" id="IPR027417">
    <property type="entry name" value="P-loop_NTPase"/>
</dbReference>
<dbReference type="InterPro" id="IPR039430">
    <property type="entry name" value="Thymidylate_kin-like_dom"/>
</dbReference>
<dbReference type="InterPro" id="IPR018095">
    <property type="entry name" value="Thymidylate_kin_CS"/>
</dbReference>
<dbReference type="InterPro" id="IPR018094">
    <property type="entry name" value="Thymidylate_kinase"/>
</dbReference>
<dbReference type="NCBIfam" id="TIGR00041">
    <property type="entry name" value="DTMP_kinase"/>
    <property type="match status" value="1"/>
</dbReference>
<dbReference type="PANTHER" id="PTHR10344">
    <property type="entry name" value="THYMIDYLATE KINASE"/>
    <property type="match status" value="1"/>
</dbReference>
<dbReference type="PANTHER" id="PTHR10344:SF4">
    <property type="entry name" value="UMP-CMP KINASE 2, MITOCHONDRIAL"/>
    <property type="match status" value="1"/>
</dbReference>
<dbReference type="Pfam" id="PF02223">
    <property type="entry name" value="Thymidylate_kin"/>
    <property type="match status" value="1"/>
</dbReference>
<dbReference type="SUPFAM" id="SSF52540">
    <property type="entry name" value="P-loop containing nucleoside triphosphate hydrolases"/>
    <property type="match status" value="1"/>
</dbReference>
<dbReference type="PROSITE" id="PS01331">
    <property type="entry name" value="THYMIDYLATE_KINASE"/>
    <property type="match status" value="1"/>
</dbReference>
<proteinExistence type="inferred from homology"/>
<accession>Q3B043</accession>
<organism>
    <name type="scientific">Synechococcus sp. (strain CC9902)</name>
    <dbReference type="NCBI Taxonomy" id="316279"/>
    <lineage>
        <taxon>Bacteria</taxon>
        <taxon>Bacillati</taxon>
        <taxon>Cyanobacteriota</taxon>
        <taxon>Cyanophyceae</taxon>
        <taxon>Synechococcales</taxon>
        <taxon>Synechococcaceae</taxon>
        <taxon>Synechococcus</taxon>
    </lineage>
</organism>
<feature type="chain" id="PRO_1000023303" description="Thymidylate kinase">
    <location>
        <begin position="1"/>
        <end position="209"/>
    </location>
</feature>
<feature type="binding site" evidence="1">
    <location>
        <begin position="10"/>
        <end position="17"/>
    </location>
    <ligand>
        <name>ATP</name>
        <dbReference type="ChEBI" id="CHEBI:30616"/>
    </ligand>
</feature>